<comment type="function">
    <text evidence="1">Catalyzes the anti-1,4-elimination of the C-3 phosphate and the C-6 proR hydrogen from 5-enolpyruvylshikimate-3-phosphate (EPSP) to yield chorismate, which is the branch point compound that serves as the starting substrate for the three terminal pathways of aromatic amino acid biosynthesis. This reaction introduces a second double bond into the aromatic ring system.</text>
</comment>
<comment type="catalytic activity">
    <reaction evidence="1">
        <text>5-O-(1-carboxyvinyl)-3-phosphoshikimate = chorismate + phosphate</text>
        <dbReference type="Rhea" id="RHEA:21020"/>
        <dbReference type="ChEBI" id="CHEBI:29748"/>
        <dbReference type="ChEBI" id="CHEBI:43474"/>
        <dbReference type="ChEBI" id="CHEBI:57701"/>
        <dbReference type="EC" id="4.2.3.5"/>
    </reaction>
</comment>
<comment type="cofactor">
    <cofactor evidence="1">
        <name>FMNH2</name>
        <dbReference type="ChEBI" id="CHEBI:57618"/>
    </cofactor>
    <text evidence="1">Reduced FMN (FMNH(2)).</text>
</comment>
<comment type="pathway">
    <text evidence="1">Metabolic intermediate biosynthesis; chorismate biosynthesis; chorismate from D-erythrose 4-phosphate and phosphoenolpyruvate: step 7/7.</text>
</comment>
<comment type="subunit">
    <text evidence="1">Homotetramer.</text>
</comment>
<comment type="similarity">
    <text evidence="1">Belongs to the chorismate synthase family.</text>
</comment>
<accession>Q0I3U1</accession>
<proteinExistence type="inferred from homology"/>
<dbReference type="EC" id="4.2.3.5" evidence="1"/>
<dbReference type="EMBL" id="CP000436">
    <property type="protein sequence ID" value="ABI25480.1"/>
    <property type="molecule type" value="Genomic_DNA"/>
</dbReference>
<dbReference type="SMR" id="Q0I3U1"/>
<dbReference type="KEGG" id="hso:HS_1205"/>
<dbReference type="eggNOG" id="COG0082">
    <property type="taxonomic scope" value="Bacteria"/>
</dbReference>
<dbReference type="HOGENOM" id="CLU_034547_0_2_6"/>
<dbReference type="UniPathway" id="UPA00053">
    <property type="reaction ID" value="UER00090"/>
</dbReference>
<dbReference type="GO" id="GO:0005829">
    <property type="term" value="C:cytosol"/>
    <property type="evidence" value="ECO:0007669"/>
    <property type="project" value="TreeGrafter"/>
</dbReference>
<dbReference type="GO" id="GO:0004107">
    <property type="term" value="F:chorismate synthase activity"/>
    <property type="evidence" value="ECO:0007669"/>
    <property type="project" value="UniProtKB-UniRule"/>
</dbReference>
<dbReference type="GO" id="GO:0010181">
    <property type="term" value="F:FMN binding"/>
    <property type="evidence" value="ECO:0007669"/>
    <property type="project" value="TreeGrafter"/>
</dbReference>
<dbReference type="GO" id="GO:0008652">
    <property type="term" value="P:amino acid biosynthetic process"/>
    <property type="evidence" value="ECO:0007669"/>
    <property type="project" value="UniProtKB-KW"/>
</dbReference>
<dbReference type="GO" id="GO:0009073">
    <property type="term" value="P:aromatic amino acid family biosynthetic process"/>
    <property type="evidence" value="ECO:0007669"/>
    <property type="project" value="UniProtKB-KW"/>
</dbReference>
<dbReference type="GO" id="GO:0009423">
    <property type="term" value="P:chorismate biosynthetic process"/>
    <property type="evidence" value="ECO:0007669"/>
    <property type="project" value="UniProtKB-UniRule"/>
</dbReference>
<dbReference type="CDD" id="cd07304">
    <property type="entry name" value="Chorismate_synthase"/>
    <property type="match status" value="1"/>
</dbReference>
<dbReference type="FunFam" id="3.60.150.10:FF:000001">
    <property type="entry name" value="Chorismate synthase"/>
    <property type="match status" value="1"/>
</dbReference>
<dbReference type="Gene3D" id="3.60.150.10">
    <property type="entry name" value="Chorismate synthase AroC"/>
    <property type="match status" value="1"/>
</dbReference>
<dbReference type="HAMAP" id="MF_00300">
    <property type="entry name" value="Chorismate_synth"/>
    <property type="match status" value="1"/>
</dbReference>
<dbReference type="InterPro" id="IPR000453">
    <property type="entry name" value="Chorismate_synth"/>
</dbReference>
<dbReference type="InterPro" id="IPR035904">
    <property type="entry name" value="Chorismate_synth_AroC_sf"/>
</dbReference>
<dbReference type="InterPro" id="IPR020541">
    <property type="entry name" value="Chorismate_synthase_CS"/>
</dbReference>
<dbReference type="NCBIfam" id="TIGR00033">
    <property type="entry name" value="aroC"/>
    <property type="match status" value="1"/>
</dbReference>
<dbReference type="NCBIfam" id="NF003793">
    <property type="entry name" value="PRK05382.1"/>
    <property type="match status" value="1"/>
</dbReference>
<dbReference type="PANTHER" id="PTHR21085">
    <property type="entry name" value="CHORISMATE SYNTHASE"/>
    <property type="match status" value="1"/>
</dbReference>
<dbReference type="PANTHER" id="PTHR21085:SF0">
    <property type="entry name" value="CHORISMATE SYNTHASE"/>
    <property type="match status" value="1"/>
</dbReference>
<dbReference type="Pfam" id="PF01264">
    <property type="entry name" value="Chorismate_synt"/>
    <property type="match status" value="1"/>
</dbReference>
<dbReference type="PIRSF" id="PIRSF001456">
    <property type="entry name" value="Chorismate_synth"/>
    <property type="match status" value="1"/>
</dbReference>
<dbReference type="SUPFAM" id="SSF103263">
    <property type="entry name" value="Chorismate synthase, AroC"/>
    <property type="match status" value="1"/>
</dbReference>
<dbReference type="PROSITE" id="PS00787">
    <property type="entry name" value="CHORISMATE_SYNTHASE_1"/>
    <property type="match status" value="1"/>
</dbReference>
<dbReference type="PROSITE" id="PS00788">
    <property type="entry name" value="CHORISMATE_SYNTHASE_2"/>
    <property type="match status" value="1"/>
</dbReference>
<dbReference type="PROSITE" id="PS00789">
    <property type="entry name" value="CHORISMATE_SYNTHASE_3"/>
    <property type="match status" value="1"/>
</dbReference>
<organism>
    <name type="scientific">Histophilus somni (strain 129Pt)</name>
    <name type="common">Haemophilus somnus</name>
    <dbReference type="NCBI Taxonomy" id="205914"/>
    <lineage>
        <taxon>Bacteria</taxon>
        <taxon>Pseudomonadati</taxon>
        <taxon>Pseudomonadota</taxon>
        <taxon>Gammaproteobacteria</taxon>
        <taxon>Pasteurellales</taxon>
        <taxon>Pasteurellaceae</taxon>
        <taxon>Histophilus</taxon>
    </lineage>
</organism>
<gene>
    <name evidence="1" type="primary">aroC</name>
    <name type="ordered locus">HS_1205</name>
</gene>
<sequence>MAGNSIGQLFRVTTFGESHGIALGCIVDGMPPGLALSEDDIQPDLDRRKPGTSKYTTPRREEDKVQILSGVFDGKTTGTSIGMIIKNTDQRSQDYGEIKDRFRPGHADFTYQQKYGLRDYRGGGRSSARETVMRVAAGAIAKKYLREYFGIEVRGYLSQIGEIKIDPQVVADVSKIDWAKVNSNPFFCPDESAVEKFDELIRELKKAGNSIGAKLTIVAEHVPVGLGEPVFDRLDADLAHALMGINAVKAVEIGDGFAVVEQKGTEHRDEMTPEGFCSNHAGGILGGISSGQPIIATIALKPTSSITVVGRSVNLNNEPVDVITKGRHDPCVGIRAVPIAEAMMAIVLLDHLLRFKAQCK</sequence>
<name>AROC_HISS1</name>
<evidence type="ECO:0000255" key="1">
    <source>
        <dbReference type="HAMAP-Rule" id="MF_00300"/>
    </source>
</evidence>
<evidence type="ECO:0000256" key="2">
    <source>
        <dbReference type="SAM" id="MobiDB-lite"/>
    </source>
</evidence>
<protein>
    <recommendedName>
        <fullName evidence="1">Chorismate synthase</fullName>
        <shortName evidence="1">CS</shortName>
        <ecNumber evidence="1">4.2.3.5</ecNumber>
    </recommendedName>
    <alternativeName>
        <fullName evidence="1">5-enolpyruvylshikimate-3-phosphate phospholyase</fullName>
    </alternativeName>
</protein>
<keyword id="KW-0028">Amino-acid biosynthesis</keyword>
<keyword id="KW-0057">Aromatic amino acid biosynthesis</keyword>
<keyword id="KW-0274">FAD</keyword>
<keyword id="KW-0285">Flavoprotein</keyword>
<keyword id="KW-0288">FMN</keyword>
<keyword id="KW-0456">Lyase</keyword>
<keyword id="KW-0521">NADP</keyword>
<reference key="1">
    <citation type="journal article" date="2007" name="J. Bacteriol.">
        <title>Complete genome sequence of Haemophilus somnus (Histophilus somni) strain 129Pt and comparison to Haemophilus ducreyi 35000HP and Haemophilus influenzae Rd.</title>
        <authorList>
            <person name="Challacombe J.F."/>
            <person name="Duncan A.J."/>
            <person name="Brettin T.S."/>
            <person name="Bruce D."/>
            <person name="Chertkov O."/>
            <person name="Detter J.C."/>
            <person name="Han C.S."/>
            <person name="Misra M."/>
            <person name="Richardson P."/>
            <person name="Tapia R."/>
            <person name="Thayer N."/>
            <person name="Xie G."/>
            <person name="Inzana T.J."/>
        </authorList>
    </citation>
    <scope>NUCLEOTIDE SEQUENCE [LARGE SCALE GENOMIC DNA]</scope>
    <source>
        <strain>129Pt</strain>
    </source>
</reference>
<feature type="chain" id="PRO_1000022496" description="Chorismate synthase">
    <location>
        <begin position="1"/>
        <end position="360"/>
    </location>
</feature>
<feature type="region of interest" description="Disordered" evidence="2">
    <location>
        <begin position="36"/>
        <end position="60"/>
    </location>
</feature>
<feature type="binding site" evidence="1">
    <location>
        <position position="48"/>
    </location>
    <ligand>
        <name>NADP(+)</name>
        <dbReference type="ChEBI" id="CHEBI:58349"/>
    </ligand>
</feature>
<feature type="binding site" evidence="1">
    <location>
        <begin position="125"/>
        <end position="127"/>
    </location>
    <ligand>
        <name>FMN</name>
        <dbReference type="ChEBI" id="CHEBI:58210"/>
    </ligand>
</feature>
<feature type="binding site" evidence="1">
    <location>
        <begin position="246"/>
        <end position="247"/>
    </location>
    <ligand>
        <name>FMN</name>
        <dbReference type="ChEBI" id="CHEBI:58210"/>
    </ligand>
</feature>
<feature type="binding site" evidence="1">
    <location>
        <position position="286"/>
    </location>
    <ligand>
        <name>FMN</name>
        <dbReference type="ChEBI" id="CHEBI:58210"/>
    </ligand>
</feature>
<feature type="binding site" evidence="1">
    <location>
        <begin position="301"/>
        <end position="305"/>
    </location>
    <ligand>
        <name>FMN</name>
        <dbReference type="ChEBI" id="CHEBI:58210"/>
    </ligand>
</feature>
<feature type="binding site" evidence="1">
    <location>
        <position position="327"/>
    </location>
    <ligand>
        <name>FMN</name>
        <dbReference type="ChEBI" id="CHEBI:58210"/>
    </ligand>
</feature>